<feature type="chain" id="PRO_1000000782" description="Adenylosuccinate synthetase">
    <location>
        <begin position="1"/>
        <end position="432"/>
    </location>
</feature>
<feature type="active site" description="Proton acceptor" evidence="1">
    <location>
        <position position="14"/>
    </location>
</feature>
<feature type="active site" description="Proton donor" evidence="1">
    <location>
        <position position="42"/>
    </location>
</feature>
<feature type="binding site" evidence="1">
    <location>
        <begin position="13"/>
        <end position="19"/>
    </location>
    <ligand>
        <name>GTP</name>
        <dbReference type="ChEBI" id="CHEBI:37565"/>
    </ligand>
</feature>
<feature type="binding site" description="in other chain" evidence="1">
    <location>
        <begin position="14"/>
        <end position="17"/>
    </location>
    <ligand>
        <name>IMP</name>
        <dbReference type="ChEBI" id="CHEBI:58053"/>
        <note>ligand shared between dimeric partners</note>
    </ligand>
</feature>
<feature type="binding site" evidence="1">
    <location>
        <position position="14"/>
    </location>
    <ligand>
        <name>Mg(2+)</name>
        <dbReference type="ChEBI" id="CHEBI:18420"/>
    </ligand>
</feature>
<feature type="binding site" description="in other chain" evidence="1">
    <location>
        <begin position="39"/>
        <end position="42"/>
    </location>
    <ligand>
        <name>IMP</name>
        <dbReference type="ChEBI" id="CHEBI:58053"/>
        <note>ligand shared between dimeric partners</note>
    </ligand>
</feature>
<feature type="binding site" evidence="1">
    <location>
        <begin position="41"/>
        <end position="43"/>
    </location>
    <ligand>
        <name>GTP</name>
        <dbReference type="ChEBI" id="CHEBI:37565"/>
    </ligand>
</feature>
<feature type="binding site" evidence="1">
    <location>
        <position position="41"/>
    </location>
    <ligand>
        <name>Mg(2+)</name>
        <dbReference type="ChEBI" id="CHEBI:18420"/>
    </ligand>
</feature>
<feature type="binding site" description="in other chain" evidence="1">
    <location>
        <position position="130"/>
    </location>
    <ligand>
        <name>IMP</name>
        <dbReference type="ChEBI" id="CHEBI:58053"/>
        <note>ligand shared between dimeric partners</note>
    </ligand>
</feature>
<feature type="binding site" evidence="1">
    <location>
        <position position="144"/>
    </location>
    <ligand>
        <name>IMP</name>
        <dbReference type="ChEBI" id="CHEBI:58053"/>
        <note>ligand shared between dimeric partners</note>
    </ligand>
</feature>
<feature type="binding site" description="in other chain" evidence="1">
    <location>
        <position position="225"/>
    </location>
    <ligand>
        <name>IMP</name>
        <dbReference type="ChEBI" id="CHEBI:58053"/>
        <note>ligand shared between dimeric partners</note>
    </ligand>
</feature>
<feature type="binding site" description="in other chain" evidence="1">
    <location>
        <position position="240"/>
    </location>
    <ligand>
        <name>IMP</name>
        <dbReference type="ChEBI" id="CHEBI:58053"/>
        <note>ligand shared between dimeric partners</note>
    </ligand>
</feature>
<feature type="binding site" evidence="1">
    <location>
        <begin position="300"/>
        <end position="306"/>
    </location>
    <ligand>
        <name>substrate</name>
    </ligand>
</feature>
<feature type="binding site" description="in other chain" evidence="1">
    <location>
        <position position="304"/>
    </location>
    <ligand>
        <name>IMP</name>
        <dbReference type="ChEBI" id="CHEBI:58053"/>
        <note>ligand shared between dimeric partners</note>
    </ligand>
</feature>
<feature type="binding site" evidence="1">
    <location>
        <position position="306"/>
    </location>
    <ligand>
        <name>GTP</name>
        <dbReference type="ChEBI" id="CHEBI:37565"/>
    </ligand>
</feature>
<feature type="binding site" evidence="1">
    <location>
        <begin position="332"/>
        <end position="334"/>
    </location>
    <ligand>
        <name>GTP</name>
        <dbReference type="ChEBI" id="CHEBI:37565"/>
    </ligand>
</feature>
<feature type="binding site" evidence="1">
    <location>
        <begin position="415"/>
        <end position="417"/>
    </location>
    <ligand>
        <name>GTP</name>
        <dbReference type="ChEBI" id="CHEBI:37565"/>
    </ligand>
</feature>
<name>PURA_BAUCH</name>
<dbReference type="EC" id="6.3.4.4" evidence="1"/>
<dbReference type="EMBL" id="CP000238">
    <property type="protein sequence ID" value="ABF14350.1"/>
    <property type="molecule type" value="Genomic_DNA"/>
</dbReference>
<dbReference type="RefSeq" id="WP_011520738.1">
    <property type="nucleotide sequence ID" value="NC_007984.1"/>
</dbReference>
<dbReference type="SMR" id="Q1LSQ9"/>
<dbReference type="STRING" id="374463.BCI_0577"/>
<dbReference type="KEGG" id="bci:BCI_0577"/>
<dbReference type="HOGENOM" id="CLU_029848_0_0_6"/>
<dbReference type="OrthoDB" id="9807553at2"/>
<dbReference type="UniPathway" id="UPA00075">
    <property type="reaction ID" value="UER00335"/>
</dbReference>
<dbReference type="Proteomes" id="UP000002427">
    <property type="component" value="Chromosome"/>
</dbReference>
<dbReference type="GO" id="GO:0005737">
    <property type="term" value="C:cytoplasm"/>
    <property type="evidence" value="ECO:0007669"/>
    <property type="project" value="UniProtKB-SubCell"/>
</dbReference>
<dbReference type="GO" id="GO:0004019">
    <property type="term" value="F:adenylosuccinate synthase activity"/>
    <property type="evidence" value="ECO:0007669"/>
    <property type="project" value="UniProtKB-UniRule"/>
</dbReference>
<dbReference type="GO" id="GO:0005525">
    <property type="term" value="F:GTP binding"/>
    <property type="evidence" value="ECO:0007669"/>
    <property type="project" value="UniProtKB-UniRule"/>
</dbReference>
<dbReference type="GO" id="GO:0000287">
    <property type="term" value="F:magnesium ion binding"/>
    <property type="evidence" value="ECO:0007669"/>
    <property type="project" value="UniProtKB-UniRule"/>
</dbReference>
<dbReference type="GO" id="GO:0044208">
    <property type="term" value="P:'de novo' AMP biosynthetic process"/>
    <property type="evidence" value="ECO:0007669"/>
    <property type="project" value="UniProtKB-UniRule"/>
</dbReference>
<dbReference type="GO" id="GO:0046040">
    <property type="term" value="P:IMP metabolic process"/>
    <property type="evidence" value="ECO:0007669"/>
    <property type="project" value="TreeGrafter"/>
</dbReference>
<dbReference type="CDD" id="cd03108">
    <property type="entry name" value="AdSS"/>
    <property type="match status" value="1"/>
</dbReference>
<dbReference type="FunFam" id="1.10.300.10:FF:000001">
    <property type="entry name" value="Adenylosuccinate synthetase"/>
    <property type="match status" value="1"/>
</dbReference>
<dbReference type="FunFam" id="3.90.170.10:FF:000001">
    <property type="entry name" value="Adenylosuccinate synthetase"/>
    <property type="match status" value="1"/>
</dbReference>
<dbReference type="Gene3D" id="3.40.440.10">
    <property type="entry name" value="Adenylosuccinate Synthetase, subunit A, domain 1"/>
    <property type="match status" value="1"/>
</dbReference>
<dbReference type="Gene3D" id="1.10.300.10">
    <property type="entry name" value="Adenylosuccinate Synthetase, subunit A, domain 2"/>
    <property type="match status" value="1"/>
</dbReference>
<dbReference type="Gene3D" id="3.90.170.10">
    <property type="entry name" value="Adenylosuccinate Synthetase, subunit A, domain 3"/>
    <property type="match status" value="1"/>
</dbReference>
<dbReference type="HAMAP" id="MF_00011">
    <property type="entry name" value="Adenylosucc_synth"/>
    <property type="match status" value="1"/>
</dbReference>
<dbReference type="InterPro" id="IPR018220">
    <property type="entry name" value="Adenylosuccin_syn_GTP-bd"/>
</dbReference>
<dbReference type="InterPro" id="IPR033128">
    <property type="entry name" value="Adenylosuccin_syn_Lys_AS"/>
</dbReference>
<dbReference type="InterPro" id="IPR042109">
    <property type="entry name" value="Adenylosuccinate_synth_dom1"/>
</dbReference>
<dbReference type="InterPro" id="IPR042110">
    <property type="entry name" value="Adenylosuccinate_synth_dom2"/>
</dbReference>
<dbReference type="InterPro" id="IPR042111">
    <property type="entry name" value="Adenylosuccinate_synth_dom3"/>
</dbReference>
<dbReference type="InterPro" id="IPR001114">
    <property type="entry name" value="Adenylosuccinate_synthetase"/>
</dbReference>
<dbReference type="InterPro" id="IPR027417">
    <property type="entry name" value="P-loop_NTPase"/>
</dbReference>
<dbReference type="NCBIfam" id="NF002223">
    <property type="entry name" value="PRK01117.1"/>
    <property type="match status" value="1"/>
</dbReference>
<dbReference type="NCBIfam" id="TIGR00184">
    <property type="entry name" value="purA"/>
    <property type="match status" value="1"/>
</dbReference>
<dbReference type="PANTHER" id="PTHR11846">
    <property type="entry name" value="ADENYLOSUCCINATE SYNTHETASE"/>
    <property type="match status" value="1"/>
</dbReference>
<dbReference type="PANTHER" id="PTHR11846:SF0">
    <property type="entry name" value="ADENYLOSUCCINATE SYNTHETASE"/>
    <property type="match status" value="1"/>
</dbReference>
<dbReference type="Pfam" id="PF00709">
    <property type="entry name" value="Adenylsucc_synt"/>
    <property type="match status" value="1"/>
</dbReference>
<dbReference type="SMART" id="SM00788">
    <property type="entry name" value="Adenylsucc_synt"/>
    <property type="match status" value="1"/>
</dbReference>
<dbReference type="SUPFAM" id="SSF52540">
    <property type="entry name" value="P-loop containing nucleoside triphosphate hydrolases"/>
    <property type="match status" value="1"/>
</dbReference>
<dbReference type="PROSITE" id="PS01266">
    <property type="entry name" value="ADENYLOSUCCIN_SYN_1"/>
    <property type="match status" value="1"/>
</dbReference>
<dbReference type="PROSITE" id="PS00513">
    <property type="entry name" value="ADENYLOSUCCIN_SYN_2"/>
    <property type="match status" value="1"/>
</dbReference>
<protein>
    <recommendedName>
        <fullName evidence="1">Adenylosuccinate synthetase</fullName>
        <shortName evidence="1">AMPSase</shortName>
        <shortName evidence="1">AdSS</shortName>
        <ecNumber evidence="1">6.3.4.4</ecNumber>
    </recommendedName>
    <alternativeName>
        <fullName evidence="1">IMP--aspartate ligase</fullName>
    </alternativeName>
</protein>
<sequence>MSNNVVVLGTQWGDEGKGKVVDILTERAKYVIRYQGGHNAGHTLVINGEKTILHLIPSGILRENVKSIIAHGVVLSPEALIKEIHELEARGIPVRQRMLISEACPLLLSYHVAMDIAREKARGTNALGTTGRGIGPAYEDKVARRALRVSDLFNKESFAIKLKDIVDYYNFQLVHYYKVEAVSYQKILNDIMVVTDMLTSMVADISVLLYNAYQQGDIMMFEGAQGTLLDIDHGTYPYVTSSNTTAGCVTTGSGLGPHYIGYVLGIVKAYSTRVGAGPFPTELFDDTGNFLCLKGHEFGATTGRRRRTGWLDAVALRRAVHINSISGLCLTKLDVLDGLKEIKICSAYRMQDGCIIYTTPIALEKWEGIEPIYETLPGWNETTVGIQALADLPRAAHQYIKLIEELTRVPVDIISTGPDRRDTIILHDPFSD</sequence>
<evidence type="ECO:0000255" key="1">
    <source>
        <dbReference type="HAMAP-Rule" id="MF_00011"/>
    </source>
</evidence>
<proteinExistence type="inferred from homology"/>
<reference key="1">
    <citation type="journal article" date="2006" name="PLoS Biol.">
        <title>Metabolic complementarity and genomics of the dual bacterial symbiosis of sharpshooters.</title>
        <authorList>
            <person name="Wu D."/>
            <person name="Daugherty S.C."/>
            <person name="Van Aken S.E."/>
            <person name="Pai G.H."/>
            <person name="Watkins K.L."/>
            <person name="Khouri H."/>
            <person name="Tallon L.J."/>
            <person name="Zaborsky J.M."/>
            <person name="Dunbar H.E."/>
            <person name="Tran P.L."/>
            <person name="Moran N.A."/>
            <person name="Eisen J.A."/>
        </authorList>
    </citation>
    <scope>NUCLEOTIDE SEQUENCE [LARGE SCALE GENOMIC DNA]</scope>
</reference>
<accession>Q1LSQ9</accession>
<comment type="function">
    <text evidence="1">Plays an important role in the de novo pathway of purine nucleotide biosynthesis. Catalyzes the first committed step in the biosynthesis of AMP from IMP.</text>
</comment>
<comment type="catalytic activity">
    <reaction evidence="1">
        <text>IMP + L-aspartate + GTP = N(6)-(1,2-dicarboxyethyl)-AMP + GDP + phosphate + 2 H(+)</text>
        <dbReference type="Rhea" id="RHEA:15753"/>
        <dbReference type="ChEBI" id="CHEBI:15378"/>
        <dbReference type="ChEBI" id="CHEBI:29991"/>
        <dbReference type="ChEBI" id="CHEBI:37565"/>
        <dbReference type="ChEBI" id="CHEBI:43474"/>
        <dbReference type="ChEBI" id="CHEBI:57567"/>
        <dbReference type="ChEBI" id="CHEBI:58053"/>
        <dbReference type="ChEBI" id="CHEBI:58189"/>
        <dbReference type="EC" id="6.3.4.4"/>
    </reaction>
</comment>
<comment type="cofactor">
    <cofactor evidence="1">
        <name>Mg(2+)</name>
        <dbReference type="ChEBI" id="CHEBI:18420"/>
    </cofactor>
    <text evidence="1">Binds 1 Mg(2+) ion per subunit.</text>
</comment>
<comment type="pathway">
    <text evidence="1">Purine metabolism; AMP biosynthesis via de novo pathway; AMP from IMP: step 1/2.</text>
</comment>
<comment type="subunit">
    <text evidence="1">Homodimer.</text>
</comment>
<comment type="subcellular location">
    <subcellularLocation>
        <location evidence="1">Cytoplasm</location>
    </subcellularLocation>
</comment>
<comment type="similarity">
    <text evidence="1">Belongs to the adenylosuccinate synthetase family.</text>
</comment>
<keyword id="KW-0963">Cytoplasm</keyword>
<keyword id="KW-0342">GTP-binding</keyword>
<keyword id="KW-0436">Ligase</keyword>
<keyword id="KW-0460">Magnesium</keyword>
<keyword id="KW-0479">Metal-binding</keyword>
<keyword id="KW-0547">Nucleotide-binding</keyword>
<keyword id="KW-0658">Purine biosynthesis</keyword>
<keyword id="KW-1185">Reference proteome</keyword>
<gene>
    <name evidence="1" type="primary">purA</name>
    <name type="ordered locus">BCI_0577</name>
</gene>
<organism>
    <name type="scientific">Baumannia cicadellinicola subsp. Homalodisca coagulata</name>
    <dbReference type="NCBI Taxonomy" id="374463"/>
    <lineage>
        <taxon>Bacteria</taxon>
        <taxon>Pseudomonadati</taxon>
        <taxon>Pseudomonadota</taxon>
        <taxon>Gammaproteobacteria</taxon>
        <taxon>Candidatus Palibaumannia</taxon>
    </lineage>
</organism>